<proteinExistence type="inferred from homology"/>
<name>FLUC2_CARHZ</name>
<reference key="1">
    <citation type="journal article" date="2005" name="PLoS Genet.">
        <title>Life in hot carbon monoxide: the complete genome sequence of Carboxydothermus hydrogenoformans Z-2901.</title>
        <authorList>
            <person name="Wu M."/>
            <person name="Ren Q."/>
            <person name="Durkin A.S."/>
            <person name="Daugherty S.C."/>
            <person name="Brinkac L.M."/>
            <person name="Dodson R.J."/>
            <person name="Madupu R."/>
            <person name="Sullivan S.A."/>
            <person name="Kolonay J.F."/>
            <person name="Nelson W.C."/>
            <person name="Tallon L.J."/>
            <person name="Jones K.M."/>
            <person name="Ulrich L.E."/>
            <person name="Gonzalez J.M."/>
            <person name="Zhulin I.B."/>
            <person name="Robb F.T."/>
            <person name="Eisen J.A."/>
        </authorList>
    </citation>
    <scope>NUCLEOTIDE SEQUENCE [LARGE SCALE GENOMIC DNA]</scope>
    <source>
        <strain>ATCC BAA-161 / DSM 6008 / Z-2901</strain>
    </source>
</reference>
<evidence type="ECO:0000255" key="1">
    <source>
        <dbReference type="HAMAP-Rule" id="MF_00454"/>
    </source>
</evidence>
<gene>
    <name evidence="1" type="primary">fluC2</name>
    <name evidence="1" type="synonym">crcB2</name>
    <name type="ordered locus">CHY_2104</name>
</gene>
<protein>
    <recommendedName>
        <fullName evidence="1">Fluoride-specific ion channel FluC 2</fullName>
    </recommendedName>
</protein>
<organism>
    <name type="scientific">Carboxydothermus hydrogenoformans (strain ATCC BAA-161 / DSM 6008 / Z-2901)</name>
    <dbReference type="NCBI Taxonomy" id="246194"/>
    <lineage>
        <taxon>Bacteria</taxon>
        <taxon>Bacillati</taxon>
        <taxon>Bacillota</taxon>
        <taxon>Clostridia</taxon>
        <taxon>Thermoanaerobacterales</taxon>
        <taxon>Thermoanaerobacteraceae</taxon>
        <taxon>Carboxydothermus</taxon>
    </lineage>
</organism>
<keyword id="KW-1003">Cell membrane</keyword>
<keyword id="KW-0407">Ion channel</keyword>
<keyword id="KW-0406">Ion transport</keyword>
<keyword id="KW-0472">Membrane</keyword>
<keyword id="KW-0479">Metal-binding</keyword>
<keyword id="KW-1185">Reference proteome</keyword>
<keyword id="KW-0915">Sodium</keyword>
<keyword id="KW-0812">Transmembrane</keyword>
<keyword id="KW-1133">Transmembrane helix</keyword>
<keyword id="KW-0813">Transport</keyword>
<dbReference type="EMBL" id="CP000141">
    <property type="protein sequence ID" value="ABB16216.1"/>
    <property type="molecule type" value="Genomic_DNA"/>
</dbReference>
<dbReference type="RefSeq" id="WP_011344996.1">
    <property type="nucleotide sequence ID" value="NC_007503.1"/>
</dbReference>
<dbReference type="SMR" id="Q3AAB1"/>
<dbReference type="STRING" id="246194.CHY_2104"/>
<dbReference type="KEGG" id="chy:CHY_2104"/>
<dbReference type="eggNOG" id="COG0239">
    <property type="taxonomic scope" value="Bacteria"/>
</dbReference>
<dbReference type="HOGENOM" id="CLU_114342_3_2_9"/>
<dbReference type="InParanoid" id="Q3AAB1"/>
<dbReference type="OrthoDB" id="9815830at2"/>
<dbReference type="Proteomes" id="UP000002706">
    <property type="component" value="Chromosome"/>
</dbReference>
<dbReference type="GO" id="GO:0005886">
    <property type="term" value="C:plasma membrane"/>
    <property type="evidence" value="ECO:0007669"/>
    <property type="project" value="UniProtKB-SubCell"/>
</dbReference>
<dbReference type="GO" id="GO:0062054">
    <property type="term" value="F:fluoride channel activity"/>
    <property type="evidence" value="ECO:0007669"/>
    <property type="project" value="UniProtKB-UniRule"/>
</dbReference>
<dbReference type="GO" id="GO:0046872">
    <property type="term" value="F:metal ion binding"/>
    <property type="evidence" value="ECO:0007669"/>
    <property type="project" value="UniProtKB-KW"/>
</dbReference>
<dbReference type="GO" id="GO:0140114">
    <property type="term" value="P:cellular detoxification of fluoride"/>
    <property type="evidence" value="ECO:0007669"/>
    <property type="project" value="UniProtKB-UniRule"/>
</dbReference>
<dbReference type="HAMAP" id="MF_00454">
    <property type="entry name" value="FluC"/>
    <property type="match status" value="1"/>
</dbReference>
<dbReference type="InterPro" id="IPR003691">
    <property type="entry name" value="FluC"/>
</dbReference>
<dbReference type="PANTHER" id="PTHR28259">
    <property type="entry name" value="FLUORIDE EXPORT PROTEIN 1-RELATED"/>
    <property type="match status" value="1"/>
</dbReference>
<dbReference type="PANTHER" id="PTHR28259:SF1">
    <property type="entry name" value="FLUORIDE EXPORT PROTEIN 1-RELATED"/>
    <property type="match status" value="1"/>
</dbReference>
<dbReference type="Pfam" id="PF02537">
    <property type="entry name" value="CRCB"/>
    <property type="match status" value="1"/>
</dbReference>
<feature type="chain" id="PRO_0000252866" description="Fluoride-specific ion channel FluC 2">
    <location>
        <begin position="1"/>
        <end position="134"/>
    </location>
</feature>
<feature type="transmembrane region" description="Helical" evidence="1">
    <location>
        <begin position="1"/>
        <end position="21"/>
    </location>
</feature>
<feature type="transmembrane region" description="Helical" evidence="1">
    <location>
        <begin position="28"/>
        <end position="48"/>
    </location>
</feature>
<feature type="transmembrane region" description="Helical" evidence="1">
    <location>
        <begin position="68"/>
        <end position="88"/>
    </location>
</feature>
<feature type="transmembrane region" description="Helical" evidence="1">
    <location>
        <begin position="92"/>
        <end position="112"/>
    </location>
</feature>
<feature type="binding site" evidence="1">
    <location>
        <position position="71"/>
    </location>
    <ligand>
        <name>Na(+)</name>
        <dbReference type="ChEBI" id="CHEBI:29101"/>
        <note>structural</note>
    </ligand>
</feature>
<feature type="binding site" evidence="1">
    <location>
        <position position="74"/>
    </location>
    <ligand>
        <name>Na(+)</name>
        <dbReference type="ChEBI" id="CHEBI:29101"/>
        <note>structural</note>
    </ligand>
</feature>
<sequence length="134" mass="14514">MNYFAVALGGFFGAIAREITGRALGTSIFPVGTLAINLSGSFLLLFFMTLFLERINVSDPVRLGLTSGFLGAYTTFSTMTKEIYLLLFQSKLLIGFAYLFLSLSGGFLSGILGRALALYLVNLNFRKNGAKDEG</sequence>
<comment type="function">
    <text evidence="1">Fluoride-specific ion channel. Important for reducing fluoride concentration in the cell, thus reducing its toxicity.</text>
</comment>
<comment type="catalytic activity">
    <reaction evidence="1">
        <text>fluoride(in) = fluoride(out)</text>
        <dbReference type="Rhea" id="RHEA:76159"/>
        <dbReference type="ChEBI" id="CHEBI:17051"/>
    </reaction>
    <physiologicalReaction direction="left-to-right" evidence="1">
        <dbReference type="Rhea" id="RHEA:76160"/>
    </physiologicalReaction>
</comment>
<comment type="activity regulation">
    <text evidence="1">Na(+) is not transported, but it plays an essential structural role and its presence is essential for fluoride channel function.</text>
</comment>
<comment type="subcellular location">
    <subcellularLocation>
        <location evidence="1">Cell membrane</location>
        <topology evidence="1">Multi-pass membrane protein</topology>
    </subcellularLocation>
</comment>
<comment type="similarity">
    <text evidence="1">Belongs to the fluoride channel Fluc/FEX (TC 1.A.43) family.</text>
</comment>
<accession>Q3AAB1</accession>